<feature type="chain" id="PRO_0000293795" description="Small ribosomal subunit protein uS3">
    <location>
        <begin position="1"/>
        <end position="315"/>
    </location>
</feature>
<feature type="domain" description="KH type-2" evidence="1">
    <location>
        <begin position="38"/>
        <end position="106"/>
    </location>
</feature>
<feature type="region of interest" description="Disordered" evidence="2">
    <location>
        <begin position="211"/>
        <end position="315"/>
    </location>
</feature>
<feature type="compositionally biased region" description="Basic residues" evidence="2">
    <location>
        <begin position="222"/>
        <end position="232"/>
    </location>
</feature>
<feature type="compositionally biased region" description="Low complexity" evidence="2">
    <location>
        <begin position="265"/>
        <end position="315"/>
    </location>
</feature>
<evidence type="ECO:0000255" key="1">
    <source>
        <dbReference type="HAMAP-Rule" id="MF_01309"/>
    </source>
</evidence>
<evidence type="ECO:0000256" key="2">
    <source>
        <dbReference type="SAM" id="MobiDB-lite"/>
    </source>
</evidence>
<evidence type="ECO:0000305" key="3"/>
<keyword id="KW-1185">Reference proteome</keyword>
<keyword id="KW-0687">Ribonucleoprotein</keyword>
<keyword id="KW-0689">Ribosomal protein</keyword>
<keyword id="KW-0694">RNA-binding</keyword>
<keyword id="KW-0699">rRNA-binding</keyword>
<reference key="1">
    <citation type="journal article" date="2007" name="Genome Res.">
        <title>Genome characteristics of facultatively symbiotic Frankia sp. strains reflect host range and host plant biogeography.</title>
        <authorList>
            <person name="Normand P."/>
            <person name="Lapierre P."/>
            <person name="Tisa L.S."/>
            <person name="Gogarten J.P."/>
            <person name="Alloisio N."/>
            <person name="Bagnarol E."/>
            <person name="Bassi C.A."/>
            <person name="Berry A.M."/>
            <person name="Bickhart D.M."/>
            <person name="Choisne N."/>
            <person name="Couloux A."/>
            <person name="Cournoyer B."/>
            <person name="Cruveiller S."/>
            <person name="Daubin V."/>
            <person name="Demange N."/>
            <person name="Francino M.P."/>
            <person name="Goltsman E."/>
            <person name="Huang Y."/>
            <person name="Kopp O.R."/>
            <person name="Labarre L."/>
            <person name="Lapidus A."/>
            <person name="Lavire C."/>
            <person name="Marechal J."/>
            <person name="Martinez M."/>
            <person name="Mastronunzio J.E."/>
            <person name="Mullin B.C."/>
            <person name="Niemann J."/>
            <person name="Pujic P."/>
            <person name="Rawnsley T."/>
            <person name="Rouy Z."/>
            <person name="Schenowitz C."/>
            <person name="Sellstedt A."/>
            <person name="Tavares F."/>
            <person name="Tomkins J.P."/>
            <person name="Vallenet D."/>
            <person name="Valverde C."/>
            <person name="Wall L.G."/>
            <person name="Wang Y."/>
            <person name="Medigue C."/>
            <person name="Benson D.R."/>
        </authorList>
    </citation>
    <scope>NUCLEOTIDE SEQUENCE [LARGE SCALE GENOMIC DNA]</scope>
    <source>
        <strain>DSM 45818 / CECT 9043 / HFP020203 / CcI3</strain>
    </source>
</reference>
<comment type="function">
    <text evidence="1">Binds the lower part of the 30S subunit head. Binds mRNA in the 70S ribosome, positioning it for translation.</text>
</comment>
<comment type="subunit">
    <text evidence="1">Part of the 30S ribosomal subunit. Forms a tight complex with proteins S10 and S14.</text>
</comment>
<comment type="similarity">
    <text evidence="1">Belongs to the universal ribosomal protein uS3 family.</text>
</comment>
<organism>
    <name type="scientific">Frankia casuarinae (strain DSM 45818 / CECT 9043 / HFP020203 / CcI3)</name>
    <dbReference type="NCBI Taxonomy" id="106370"/>
    <lineage>
        <taxon>Bacteria</taxon>
        <taxon>Bacillati</taxon>
        <taxon>Actinomycetota</taxon>
        <taxon>Actinomycetes</taxon>
        <taxon>Frankiales</taxon>
        <taxon>Frankiaceae</taxon>
        <taxon>Frankia</taxon>
    </lineage>
</organism>
<protein>
    <recommendedName>
        <fullName evidence="1">Small ribosomal subunit protein uS3</fullName>
    </recommendedName>
    <alternativeName>
        <fullName evidence="3">30S ribosomal protein S3</fullName>
    </alternativeName>
</protein>
<sequence>MGQKVNPHGFRLGITSEFTSRWYADKQYKAYVGEDVKIRKMMSRGMERAGISRVDIERTQGRLRVDIHTARPGIVIGRRGAEADRIRGDLEKLTGKQVQLNILEVKNPEVDAQLVAQGVAEQLSSRVSFRRAMRKAMQTAMKGGAKGIRVQCSGRLGGAEMSRSEFYREGRVPLHTLRADIDYGFYEARTNFGRIGVKVWIYKGDIVQSRAEREAQEALQRQTRRERPRRGPRSGSSGTTQGGTEAGRAAARGERRGRGGGGGNAPAETPAGEAAATEPTAPVAEPATAAASAPAEAASAPAEAAVANTPEKAEE</sequence>
<name>RS3_FRACC</name>
<accession>Q2JFH0</accession>
<gene>
    <name evidence="1" type="primary">rpsC</name>
    <name type="ordered locus">Francci3_0588</name>
</gene>
<proteinExistence type="inferred from homology"/>
<dbReference type="EMBL" id="CP000249">
    <property type="protein sequence ID" value="ABD09972.1"/>
    <property type="molecule type" value="Genomic_DNA"/>
</dbReference>
<dbReference type="RefSeq" id="WP_011435045.1">
    <property type="nucleotide sequence ID" value="NZ_LRTJ01000013.1"/>
</dbReference>
<dbReference type="SMR" id="Q2JFH0"/>
<dbReference type="STRING" id="106370.Francci3_0588"/>
<dbReference type="KEGG" id="fra:Francci3_0588"/>
<dbReference type="eggNOG" id="COG0092">
    <property type="taxonomic scope" value="Bacteria"/>
</dbReference>
<dbReference type="HOGENOM" id="CLU_058591_0_0_11"/>
<dbReference type="OrthoDB" id="9806396at2"/>
<dbReference type="PhylomeDB" id="Q2JFH0"/>
<dbReference type="Proteomes" id="UP000001937">
    <property type="component" value="Chromosome"/>
</dbReference>
<dbReference type="GO" id="GO:0022627">
    <property type="term" value="C:cytosolic small ribosomal subunit"/>
    <property type="evidence" value="ECO:0007669"/>
    <property type="project" value="TreeGrafter"/>
</dbReference>
<dbReference type="GO" id="GO:0003729">
    <property type="term" value="F:mRNA binding"/>
    <property type="evidence" value="ECO:0007669"/>
    <property type="project" value="UniProtKB-UniRule"/>
</dbReference>
<dbReference type="GO" id="GO:0019843">
    <property type="term" value="F:rRNA binding"/>
    <property type="evidence" value="ECO:0007669"/>
    <property type="project" value="UniProtKB-UniRule"/>
</dbReference>
<dbReference type="GO" id="GO:0003735">
    <property type="term" value="F:structural constituent of ribosome"/>
    <property type="evidence" value="ECO:0007669"/>
    <property type="project" value="InterPro"/>
</dbReference>
<dbReference type="GO" id="GO:0006412">
    <property type="term" value="P:translation"/>
    <property type="evidence" value="ECO:0007669"/>
    <property type="project" value="UniProtKB-UniRule"/>
</dbReference>
<dbReference type="CDD" id="cd02412">
    <property type="entry name" value="KH-II_30S_S3"/>
    <property type="match status" value="1"/>
</dbReference>
<dbReference type="FunFam" id="3.30.1140.32:FF:000002">
    <property type="entry name" value="30S ribosomal protein S3"/>
    <property type="match status" value="1"/>
</dbReference>
<dbReference type="FunFam" id="3.30.300.20:FF:000001">
    <property type="entry name" value="30S ribosomal protein S3"/>
    <property type="match status" value="1"/>
</dbReference>
<dbReference type="Gene3D" id="3.30.300.20">
    <property type="match status" value="1"/>
</dbReference>
<dbReference type="Gene3D" id="3.30.1140.32">
    <property type="entry name" value="Ribosomal protein S3, C-terminal domain"/>
    <property type="match status" value="1"/>
</dbReference>
<dbReference type="HAMAP" id="MF_01309_B">
    <property type="entry name" value="Ribosomal_uS3_B"/>
    <property type="match status" value="1"/>
</dbReference>
<dbReference type="InterPro" id="IPR004087">
    <property type="entry name" value="KH_dom"/>
</dbReference>
<dbReference type="InterPro" id="IPR015946">
    <property type="entry name" value="KH_dom-like_a/b"/>
</dbReference>
<dbReference type="InterPro" id="IPR004044">
    <property type="entry name" value="KH_dom_type_2"/>
</dbReference>
<dbReference type="InterPro" id="IPR009019">
    <property type="entry name" value="KH_sf_prok-type"/>
</dbReference>
<dbReference type="InterPro" id="IPR036419">
    <property type="entry name" value="Ribosomal_S3_C_sf"/>
</dbReference>
<dbReference type="InterPro" id="IPR005704">
    <property type="entry name" value="Ribosomal_uS3_bac-typ"/>
</dbReference>
<dbReference type="InterPro" id="IPR001351">
    <property type="entry name" value="Ribosomal_uS3_C"/>
</dbReference>
<dbReference type="InterPro" id="IPR018280">
    <property type="entry name" value="Ribosomal_uS3_CS"/>
</dbReference>
<dbReference type="NCBIfam" id="TIGR01009">
    <property type="entry name" value="rpsC_bact"/>
    <property type="match status" value="1"/>
</dbReference>
<dbReference type="PANTHER" id="PTHR11760">
    <property type="entry name" value="30S/40S RIBOSOMAL PROTEIN S3"/>
    <property type="match status" value="1"/>
</dbReference>
<dbReference type="PANTHER" id="PTHR11760:SF19">
    <property type="entry name" value="SMALL RIBOSOMAL SUBUNIT PROTEIN US3C"/>
    <property type="match status" value="1"/>
</dbReference>
<dbReference type="Pfam" id="PF07650">
    <property type="entry name" value="KH_2"/>
    <property type="match status" value="1"/>
</dbReference>
<dbReference type="Pfam" id="PF00189">
    <property type="entry name" value="Ribosomal_S3_C"/>
    <property type="match status" value="1"/>
</dbReference>
<dbReference type="SMART" id="SM00322">
    <property type="entry name" value="KH"/>
    <property type="match status" value="1"/>
</dbReference>
<dbReference type="SUPFAM" id="SSF54814">
    <property type="entry name" value="Prokaryotic type KH domain (KH-domain type II)"/>
    <property type="match status" value="1"/>
</dbReference>
<dbReference type="SUPFAM" id="SSF54821">
    <property type="entry name" value="Ribosomal protein S3 C-terminal domain"/>
    <property type="match status" value="1"/>
</dbReference>
<dbReference type="PROSITE" id="PS50823">
    <property type="entry name" value="KH_TYPE_2"/>
    <property type="match status" value="1"/>
</dbReference>
<dbReference type="PROSITE" id="PS00548">
    <property type="entry name" value="RIBOSOMAL_S3"/>
    <property type="match status" value="1"/>
</dbReference>